<sequence>MTMSLEVFEKLEAKVQQAIDTITLLQMEIEELKEKNNSLSQEVQNAQHQREELERENNHLKEQQNGWQERLQALLGRMEEV</sequence>
<evidence type="ECO:0000255" key="1">
    <source>
        <dbReference type="HAMAP-Rule" id="MF_01196"/>
    </source>
</evidence>
<evidence type="ECO:0000256" key="2">
    <source>
        <dbReference type="SAM" id="MobiDB-lite"/>
    </source>
</evidence>
<feature type="chain" id="PRO_1000138435" description="Cell division protein ZapB">
    <location>
        <begin position="1"/>
        <end position="81"/>
    </location>
</feature>
<feature type="region of interest" description="Disordered" evidence="2">
    <location>
        <begin position="36"/>
        <end position="67"/>
    </location>
</feature>
<feature type="coiled-coil region" evidence="1">
    <location>
        <begin position="5"/>
        <end position="81"/>
    </location>
</feature>
<feature type="compositionally biased region" description="Polar residues" evidence="2">
    <location>
        <begin position="37"/>
        <end position="47"/>
    </location>
</feature>
<feature type="compositionally biased region" description="Basic and acidic residues" evidence="2">
    <location>
        <begin position="48"/>
        <end position="62"/>
    </location>
</feature>
<feature type="modified residue" description="N6-acetyllysine" evidence="1">
    <location>
        <position position="10"/>
    </location>
</feature>
<gene>
    <name evidence="1" type="primary">zapB</name>
    <name type="ordered locus">ECUMN_4456</name>
</gene>
<reference key="1">
    <citation type="journal article" date="2009" name="PLoS Genet.">
        <title>Organised genome dynamics in the Escherichia coli species results in highly diverse adaptive paths.</title>
        <authorList>
            <person name="Touchon M."/>
            <person name="Hoede C."/>
            <person name="Tenaillon O."/>
            <person name="Barbe V."/>
            <person name="Baeriswyl S."/>
            <person name="Bidet P."/>
            <person name="Bingen E."/>
            <person name="Bonacorsi S."/>
            <person name="Bouchier C."/>
            <person name="Bouvet O."/>
            <person name="Calteau A."/>
            <person name="Chiapello H."/>
            <person name="Clermont O."/>
            <person name="Cruveiller S."/>
            <person name="Danchin A."/>
            <person name="Diard M."/>
            <person name="Dossat C."/>
            <person name="Karoui M.E."/>
            <person name="Frapy E."/>
            <person name="Garry L."/>
            <person name="Ghigo J.M."/>
            <person name="Gilles A.M."/>
            <person name="Johnson J."/>
            <person name="Le Bouguenec C."/>
            <person name="Lescat M."/>
            <person name="Mangenot S."/>
            <person name="Martinez-Jehanne V."/>
            <person name="Matic I."/>
            <person name="Nassif X."/>
            <person name="Oztas S."/>
            <person name="Petit M.A."/>
            <person name="Pichon C."/>
            <person name="Rouy Z."/>
            <person name="Ruf C.S."/>
            <person name="Schneider D."/>
            <person name="Tourret J."/>
            <person name="Vacherie B."/>
            <person name="Vallenet D."/>
            <person name="Medigue C."/>
            <person name="Rocha E.P.C."/>
            <person name="Denamur E."/>
        </authorList>
    </citation>
    <scope>NUCLEOTIDE SEQUENCE [LARGE SCALE GENOMIC DNA]</scope>
    <source>
        <strain>UMN026 / ExPEC</strain>
    </source>
</reference>
<proteinExistence type="inferred from homology"/>
<accession>B7NFM5</accession>
<protein>
    <recommendedName>
        <fullName evidence="1">Cell division protein ZapB</fullName>
    </recommendedName>
</protein>
<name>ZAPB_ECOLU</name>
<keyword id="KW-0007">Acetylation</keyword>
<keyword id="KW-0131">Cell cycle</keyword>
<keyword id="KW-0132">Cell division</keyword>
<keyword id="KW-0175">Coiled coil</keyword>
<keyword id="KW-0963">Cytoplasm</keyword>
<keyword id="KW-0717">Septation</keyword>
<organism>
    <name type="scientific">Escherichia coli O17:K52:H18 (strain UMN026 / ExPEC)</name>
    <dbReference type="NCBI Taxonomy" id="585056"/>
    <lineage>
        <taxon>Bacteria</taxon>
        <taxon>Pseudomonadati</taxon>
        <taxon>Pseudomonadota</taxon>
        <taxon>Gammaproteobacteria</taxon>
        <taxon>Enterobacterales</taxon>
        <taxon>Enterobacteriaceae</taxon>
        <taxon>Escherichia</taxon>
    </lineage>
</organism>
<comment type="function">
    <text evidence="1">Non-essential, abundant cell division factor that is required for proper Z-ring formation. It is recruited early to the divisome by direct interaction with FtsZ, stimulating Z-ring assembly and thereby promoting cell division earlier in the cell cycle. Its recruitment to the Z-ring requires functional FtsA or ZipA.</text>
</comment>
<comment type="subunit">
    <text evidence="1">Homodimer. The ends of the coiled-coil dimer bind to each other, forming polymers. Interacts with FtsZ.</text>
</comment>
<comment type="subcellular location">
    <subcellularLocation>
        <location evidence="1">Cytoplasm</location>
    </subcellularLocation>
    <text evidence="1">Localizes to the septum at mid-cell, in a FtsZ-like pattern.</text>
</comment>
<comment type="similarity">
    <text evidence="1">Belongs to the ZapB family.</text>
</comment>
<dbReference type="EMBL" id="CU928163">
    <property type="protein sequence ID" value="CAR15582.1"/>
    <property type="molecule type" value="Genomic_DNA"/>
</dbReference>
<dbReference type="RefSeq" id="WP_001296623.1">
    <property type="nucleotide sequence ID" value="NC_011751.1"/>
</dbReference>
<dbReference type="RefSeq" id="YP_002415071.1">
    <property type="nucleotide sequence ID" value="NC_011751.1"/>
</dbReference>
<dbReference type="SMR" id="B7NFM5"/>
<dbReference type="STRING" id="585056.ECUMN_4456"/>
<dbReference type="GeneID" id="93777970"/>
<dbReference type="KEGG" id="eum:ECUMN_4456"/>
<dbReference type="PATRIC" id="fig|585056.7.peg.4626"/>
<dbReference type="HOGENOM" id="CLU_171174_2_0_6"/>
<dbReference type="Proteomes" id="UP000007097">
    <property type="component" value="Chromosome"/>
</dbReference>
<dbReference type="GO" id="GO:0005737">
    <property type="term" value="C:cytoplasm"/>
    <property type="evidence" value="ECO:0007669"/>
    <property type="project" value="UniProtKB-SubCell"/>
</dbReference>
<dbReference type="GO" id="GO:0000917">
    <property type="term" value="P:division septum assembly"/>
    <property type="evidence" value="ECO:0007669"/>
    <property type="project" value="UniProtKB-KW"/>
</dbReference>
<dbReference type="GO" id="GO:0043093">
    <property type="term" value="P:FtsZ-dependent cytokinesis"/>
    <property type="evidence" value="ECO:0007669"/>
    <property type="project" value="UniProtKB-UniRule"/>
</dbReference>
<dbReference type="FunFam" id="1.20.5.340:FF:000014">
    <property type="entry name" value="Cell division protein ZapB"/>
    <property type="match status" value="1"/>
</dbReference>
<dbReference type="Gene3D" id="1.20.5.340">
    <property type="match status" value="1"/>
</dbReference>
<dbReference type="HAMAP" id="MF_01196">
    <property type="entry name" value="ZapB"/>
    <property type="match status" value="1"/>
</dbReference>
<dbReference type="InterPro" id="IPR009252">
    <property type="entry name" value="Cell_div_ZapB"/>
</dbReference>
<dbReference type="NCBIfam" id="NF011951">
    <property type="entry name" value="PRK15422.1"/>
    <property type="match status" value="1"/>
</dbReference>
<dbReference type="Pfam" id="PF06005">
    <property type="entry name" value="ZapB"/>
    <property type="match status" value="1"/>
</dbReference>